<accession>Q2YN02</accession>
<comment type="function">
    <text evidence="1">Digests double-stranded RNA. Involved in the processing of primary rRNA transcript to yield the immediate precursors to the large and small rRNAs (23S and 16S). Processes some mRNAs, and tRNAs when they are encoded in the rRNA operon. Processes pre-crRNA and tracrRNA of type II CRISPR loci if present in the organism.</text>
</comment>
<comment type="catalytic activity">
    <reaction evidence="1">
        <text>Endonucleolytic cleavage to 5'-phosphomonoester.</text>
        <dbReference type="EC" id="3.1.26.3"/>
    </reaction>
</comment>
<comment type="cofactor">
    <cofactor evidence="1">
        <name>Mg(2+)</name>
        <dbReference type="ChEBI" id="CHEBI:18420"/>
    </cofactor>
</comment>
<comment type="subunit">
    <text evidence="1">Homodimer.</text>
</comment>
<comment type="subcellular location">
    <subcellularLocation>
        <location evidence="1">Cytoplasm</location>
    </subcellularLocation>
</comment>
<comment type="similarity">
    <text evidence="1">Belongs to the ribonuclease III family.</text>
</comment>
<keyword id="KW-0963">Cytoplasm</keyword>
<keyword id="KW-0255">Endonuclease</keyword>
<keyword id="KW-0378">Hydrolase</keyword>
<keyword id="KW-0460">Magnesium</keyword>
<keyword id="KW-0479">Metal-binding</keyword>
<keyword id="KW-0507">mRNA processing</keyword>
<keyword id="KW-0540">Nuclease</keyword>
<keyword id="KW-1185">Reference proteome</keyword>
<keyword id="KW-0694">RNA-binding</keyword>
<keyword id="KW-0698">rRNA processing</keyword>
<keyword id="KW-0699">rRNA-binding</keyword>
<keyword id="KW-0819">tRNA processing</keyword>
<protein>
    <recommendedName>
        <fullName evidence="1">Ribonuclease 3</fullName>
        <ecNumber evidence="1">3.1.26.3</ecNumber>
    </recommendedName>
    <alternativeName>
        <fullName evidence="1">Ribonuclease III</fullName>
        <shortName evidence="1">RNase III</shortName>
    </alternativeName>
</protein>
<name>RNC_BRUA2</name>
<gene>
    <name evidence="1" type="primary">rnc</name>
    <name type="ordered locus">BAB1_0681</name>
</gene>
<organism>
    <name type="scientific">Brucella abortus (strain 2308)</name>
    <dbReference type="NCBI Taxonomy" id="359391"/>
    <lineage>
        <taxon>Bacteria</taxon>
        <taxon>Pseudomonadati</taxon>
        <taxon>Pseudomonadota</taxon>
        <taxon>Alphaproteobacteria</taxon>
        <taxon>Hyphomicrobiales</taxon>
        <taxon>Brucellaceae</taxon>
        <taxon>Brucella/Ochrobactrum group</taxon>
        <taxon>Brucella</taxon>
    </lineage>
</organism>
<proteinExistence type="inferred from homology"/>
<sequence length="245" mass="27220">MNRTRPLPEIKMVSANKTASILEERTGHRFLNLKRLERALTHSSVQAPARANYERLEFLGDRVLGLTVAEMLFEAFPEASEGELSVRLNALVNAETCAAIADEIGLADLIHTGSDIKSLNDKRLLNVRADVVEALIATIYLDGGLEAARSFIQRYWKKRSLETGAARRDAKTELQEWAHQQGNVHPVYAILSRSGPDHDPLFLVEVTVKGFAPEKGEGRSKRIAEQSAAEAMLYREGVWKRDGSA</sequence>
<dbReference type="EC" id="3.1.26.3" evidence="1"/>
<dbReference type="EMBL" id="AM040264">
    <property type="protein sequence ID" value="CAJ10637.1"/>
    <property type="molecule type" value="Genomic_DNA"/>
</dbReference>
<dbReference type="SMR" id="Q2YN02"/>
<dbReference type="STRING" id="359391.BAB1_0681"/>
<dbReference type="KEGG" id="bmf:BAB1_0681"/>
<dbReference type="HOGENOM" id="CLU_000907_1_1_5"/>
<dbReference type="Proteomes" id="UP000002719">
    <property type="component" value="Chromosome I"/>
</dbReference>
<dbReference type="GO" id="GO:0005737">
    <property type="term" value="C:cytoplasm"/>
    <property type="evidence" value="ECO:0007669"/>
    <property type="project" value="UniProtKB-SubCell"/>
</dbReference>
<dbReference type="GO" id="GO:0003725">
    <property type="term" value="F:double-stranded RNA binding"/>
    <property type="evidence" value="ECO:0007669"/>
    <property type="project" value="TreeGrafter"/>
</dbReference>
<dbReference type="GO" id="GO:0046872">
    <property type="term" value="F:metal ion binding"/>
    <property type="evidence" value="ECO:0007669"/>
    <property type="project" value="UniProtKB-KW"/>
</dbReference>
<dbReference type="GO" id="GO:0004525">
    <property type="term" value="F:ribonuclease III activity"/>
    <property type="evidence" value="ECO:0007669"/>
    <property type="project" value="UniProtKB-UniRule"/>
</dbReference>
<dbReference type="GO" id="GO:0019843">
    <property type="term" value="F:rRNA binding"/>
    <property type="evidence" value="ECO:0007669"/>
    <property type="project" value="UniProtKB-KW"/>
</dbReference>
<dbReference type="GO" id="GO:0006397">
    <property type="term" value="P:mRNA processing"/>
    <property type="evidence" value="ECO:0007669"/>
    <property type="project" value="UniProtKB-UniRule"/>
</dbReference>
<dbReference type="GO" id="GO:0010468">
    <property type="term" value="P:regulation of gene expression"/>
    <property type="evidence" value="ECO:0007669"/>
    <property type="project" value="TreeGrafter"/>
</dbReference>
<dbReference type="GO" id="GO:0006364">
    <property type="term" value="P:rRNA processing"/>
    <property type="evidence" value="ECO:0007669"/>
    <property type="project" value="UniProtKB-UniRule"/>
</dbReference>
<dbReference type="GO" id="GO:0008033">
    <property type="term" value="P:tRNA processing"/>
    <property type="evidence" value="ECO:0007669"/>
    <property type="project" value="UniProtKB-KW"/>
</dbReference>
<dbReference type="CDD" id="cd10845">
    <property type="entry name" value="DSRM_RNAse_III_family"/>
    <property type="match status" value="1"/>
</dbReference>
<dbReference type="CDD" id="cd00593">
    <property type="entry name" value="RIBOc"/>
    <property type="match status" value="1"/>
</dbReference>
<dbReference type="FunFam" id="3.30.160.20:FF:000003">
    <property type="entry name" value="Ribonuclease 3"/>
    <property type="match status" value="1"/>
</dbReference>
<dbReference type="Gene3D" id="3.30.160.20">
    <property type="match status" value="1"/>
</dbReference>
<dbReference type="Gene3D" id="1.10.1520.10">
    <property type="entry name" value="Ribonuclease III domain"/>
    <property type="match status" value="1"/>
</dbReference>
<dbReference type="HAMAP" id="MF_00104">
    <property type="entry name" value="RNase_III"/>
    <property type="match status" value="1"/>
</dbReference>
<dbReference type="InterPro" id="IPR014720">
    <property type="entry name" value="dsRBD_dom"/>
</dbReference>
<dbReference type="InterPro" id="IPR011907">
    <property type="entry name" value="RNase_III"/>
</dbReference>
<dbReference type="InterPro" id="IPR000999">
    <property type="entry name" value="RNase_III_dom"/>
</dbReference>
<dbReference type="InterPro" id="IPR036389">
    <property type="entry name" value="RNase_III_sf"/>
</dbReference>
<dbReference type="NCBIfam" id="TIGR02191">
    <property type="entry name" value="RNaseIII"/>
    <property type="match status" value="1"/>
</dbReference>
<dbReference type="PANTHER" id="PTHR11207:SF0">
    <property type="entry name" value="RIBONUCLEASE 3"/>
    <property type="match status" value="1"/>
</dbReference>
<dbReference type="PANTHER" id="PTHR11207">
    <property type="entry name" value="RIBONUCLEASE III"/>
    <property type="match status" value="1"/>
</dbReference>
<dbReference type="Pfam" id="PF00035">
    <property type="entry name" value="dsrm"/>
    <property type="match status" value="1"/>
</dbReference>
<dbReference type="Pfam" id="PF14622">
    <property type="entry name" value="Ribonucleas_3_3"/>
    <property type="match status" value="1"/>
</dbReference>
<dbReference type="SMART" id="SM00358">
    <property type="entry name" value="DSRM"/>
    <property type="match status" value="1"/>
</dbReference>
<dbReference type="SMART" id="SM00535">
    <property type="entry name" value="RIBOc"/>
    <property type="match status" value="1"/>
</dbReference>
<dbReference type="SUPFAM" id="SSF54768">
    <property type="entry name" value="dsRNA-binding domain-like"/>
    <property type="match status" value="1"/>
</dbReference>
<dbReference type="SUPFAM" id="SSF69065">
    <property type="entry name" value="RNase III domain-like"/>
    <property type="match status" value="1"/>
</dbReference>
<dbReference type="PROSITE" id="PS50137">
    <property type="entry name" value="DS_RBD"/>
    <property type="match status" value="1"/>
</dbReference>
<dbReference type="PROSITE" id="PS00517">
    <property type="entry name" value="RNASE_3_1"/>
    <property type="match status" value="1"/>
</dbReference>
<dbReference type="PROSITE" id="PS50142">
    <property type="entry name" value="RNASE_3_2"/>
    <property type="match status" value="1"/>
</dbReference>
<evidence type="ECO:0000255" key="1">
    <source>
        <dbReference type="HAMAP-Rule" id="MF_00104"/>
    </source>
</evidence>
<reference key="1">
    <citation type="journal article" date="2005" name="Infect. Immun.">
        <title>Whole-genome analyses of speciation events in pathogenic Brucellae.</title>
        <authorList>
            <person name="Chain P.S."/>
            <person name="Comerci D.J."/>
            <person name="Tolmasky M.E."/>
            <person name="Larimer F.W."/>
            <person name="Malfatti S.A."/>
            <person name="Vergez L.M."/>
            <person name="Aguero F."/>
            <person name="Land M.L."/>
            <person name="Ugalde R.A."/>
            <person name="Garcia E."/>
        </authorList>
    </citation>
    <scope>NUCLEOTIDE SEQUENCE [LARGE SCALE GENOMIC DNA]</scope>
    <source>
        <strain>2308</strain>
    </source>
</reference>
<feature type="chain" id="PRO_0000228510" description="Ribonuclease 3">
    <location>
        <begin position="1"/>
        <end position="245"/>
    </location>
</feature>
<feature type="domain" description="RNase III" evidence="1">
    <location>
        <begin position="19"/>
        <end position="144"/>
    </location>
</feature>
<feature type="domain" description="DRBM" evidence="1">
    <location>
        <begin position="169"/>
        <end position="238"/>
    </location>
</feature>
<feature type="active site" evidence="1">
    <location>
        <position position="61"/>
    </location>
</feature>
<feature type="active site" evidence="1">
    <location>
        <position position="133"/>
    </location>
</feature>
<feature type="binding site" evidence="1">
    <location>
        <position position="57"/>
    </location>
    <ligand>
        <name>Mg(2+)</name>
        <dbReference type="ChEBI" id="CHEBI:18420"/>
    </ligand>
</feature>
<feature type="binding site" evidence="1">
    <location>
        <position position="130"/>
    </location>
    <ligand>
        <name>Mg(2+)</name>
        <dbReference type="ChEBI" id="CHEBI:18420"/>
    </ligand>
</feature>
<feature type="binding site" evidence="1">
    <location>
        <position position="133"/>
    </location>
    <ligand>
        <name>Mg(2+)</name>
        <dbReference type="ChEBI" id="CHEBI:18420"/>
    </ligand>
</feature>